<comment type="function">
    <text evidence="1 2 3 6">Part of the ABC transporter complex GltIJKL involved in glutamate and aspartate uptake. Binds to both glutamate and aspartate.</text>
</comment>
<comment type="subunit">
    <text evidence="6">The complex is composed of two ATP-binding proteins (GltL), two transmembrane proteins (GltJ and GltK) and a solute-binding protein (GltI).</text>
</comment>
<comment type="subcellular location">
    <subcellularLocation>
        <location evidence="1">Periplasm</location>
    </subcellularLocation>
</comment>
<comment type="similarity">
    <text evidence="5">Belongs to the bacterial solute-binding protein 3 family.</text>
</comment>
<dbReference type="EMBL" id="U82598">
    <property type="protein sequence ID" value="AAB40856.1"/>
    <property type="molecule type" value="Genomic_DNA"/>
</dbReference>
<dbReference type="EMBL" id="U00096">
    <property type="protein sequence ID" value="AAC73756.1"/>
    <property type="molecule type" value="Genomic_DNA"/>
</dbReference>
<dbReference type="EMBL" id="AP009048">
    <property type="protein sequence ID" value="BAA35307.2"/>
    <property type="molecule type" value="Genomic_DNA"/>
</dbReference>
<dbReference type="EMBL" id="U10981">
    <property type="status" value="NOT_ANNOTATED_CDS"/>
    <property type="molecule type" value="Genomic_DNA"/>
</dbReference>
<dbReference type="PIR" id="E64800">
    <property type="entry name" value="E64800"/>
</dbReference>
<dbReference type="RefSeq" id="NP_415188.1">
    <property type="nucleotide sequence ID" value="NC_000913.3"/>
</dbReference>
<dbReference type="RefSeq" id="WP_001177086.1">
    <property type="nucleotide sequence ID" value="NZ_SSZK01000037.1"/>
</dbReference>
<dbReference type="PDB" id="8OVN">
    <property type="method" value="X-ray"/>
    <property type="resolution" value="2.60 A"/>
    <property type="chains" value="A=28-294"/>
</dbReference>
<dbReference type="PDB" id="8OVO">
    <property type="method" value="X-ray"/>
    <property type="resolution" value="1.70 A"/>
    <property type="chains" value="A/B=28-294"/>
</dbReference>
<dbReference type="PDB" id="8OVP">
    <property type="method" value="X-ray"/>
    <property type="resolution" value="1.70 A"/>
    <property type="chains" value="A/B=28-294"/>
</dbReference>
<dbReference type="PDBsum" id="8OVN"/>
<dbReference type="PDBsum" id="8OVO"/>
<dbReference type="PDBsum" id="8OVP"/>
<dbReference type="SASBDB" id="P37902"/>
<dbReference type="SMR" id="P37902"/>
<dbReference type="BioGRID" id="4260829">
    <property type="interactions" value="22"/>
</dbReference>
<dbReference type="BioGRID" id="851277">
    <property type="interactions" value="3"/>
</dbReference>
<dbReference type="ComplexPortal" id="CPX-4324">
    <property type="entry name" value="Glutamate/aspartate ABC transporter complex"/>
</dbReference>
<dbReference type="DIP" id="DIP-11361N"/>
<dbReference type="FunCoup" id="P37902">
    <property type="interactions" value="362"/>
</dbReference>
<dbReference type="IntAct" id="P37902">
    <property type="interactions" value="1"/>
</dbReference>
<dbReference type="STRING" id="511145.b0655"/>
<dbReference type="TCDB" id="3.A.1.3.4">
    <property type="family name" value="the atp-binding cassette (abc) superfamily"/>
</dbReference>
<dbReference type="jPOST" id="P37902"/>
<dbReference type="PaxDb" id="511145-b0655"/>
<dbReference type="EnsemblBacteria" id="AAC73756">
    <property type="protein sequence ID" value="AAC73756"/>
    <property type="gene ID" value="b0655"/>
</dbReference>
<dbReference type="GeneID" id="946938"/>
<dbReference type="KEGG" id="ecj:JW5092"/>
<dbReference type="KEGG" id="eco:b0655"/>
<dbReference type="KEGG" id="ecoc:C3026_03275"/>
<dbReference type="PATRIC" id="fig|1411691.4.peg.1613"/>
<dbReference type="EchoBASE" id="EB2562"/>
<dbReference type="eggNOG" id="COG0834">
    <property type="taxonomic scope" value="Bacteria"/>
</dbReference>
<dbReference type="HOGENOM" id="CLU_019602_0_0_6"/>
<dbReference type="InParanoid" id="P37902"/>
<dbReference type="OMA" id="SYEIYGC"/>
<dbReference type="OrthoDB" id="7240770at2"/>
<dbReference type="PhylomeDB" id="P37902"/>
<dbReference type="BioCyc" id="EcoCyc:G6359-MONOMER"/>
<dbReference type="BioCyc" id="MetaCyc:G6359-MONOMER"/>
<dbReference type="PRO" id="PR:P37902"/>
<dbReference type="Proteomes" id="UP000000625">
    <property type="component" value="Chromosome"/>
</dbReference>
<dbReference type="GO" id="GO:0055052">
    <property type="term" value="C:ATP-binding cassette (ABC) transporter complex, substrate-binding subunit-containing"/>
    <property type="evidence" value="ECO:0000303"/>
    <property type="project" value="ComplexPortal"/>
</dbReference>
<dbReference type="GO" id="GO:0005576">
    <property type="term" value="C:extracellular region"/>
    <property type="evidence" value="ECO:0000318"/>
    <property type="project" value="GO_Central"/>
</dbReference>
<dbReference type="GO" id="GO:0016020">
    <property type="term" value="C:membrane"/>
    <property type="evidence" value="ECO:0000303"/>
    <property type="project" value="ComplexPortal"/>
</dbReference>
<dbReference type="GO" id="GO:0030288">
    <property type="term" value="C:outer membrane-bounded periplasmic space"/>
    <property type="evidence" value="ECO:0000314"/>
    <property type="project" value="EcoCyc"/>
</dbReference>
<dbReference type="GO" id="GO:0070335">
    <property type="term" value="F:aspartate binding"/>
    <property type="evidence" value="ECO:0000353"/>
    <property type="project" value="EcoCyc"/>
</dbReference>
<dbReference type="GO" id="GO:0016595">
    <property type="term" value="F:glutamate binding"/>
    <property type="evidence" value="ECO:0000353"/>
    <property type="project" value="EcoCyc"/>
</dbReference>
<dbReference type="GO" id="GO:0006865">
    <property type="term" value="P:amino acid transport"/>
    <property type="evidence" value="ECO:0000318"/>
    <property type="project" value="GO_Central"/>
</dbReference>
<dbReference type="GO" id="GO:0140009">
    <property type="term" value="P:L-aspartate import across plasma membrane"/>
    <property type="evidence" value="ECO:0000303"/>
    <property type="project" value="ComplexPortal"/>
</dbReference>
<dbReference type="GO" id="GO:0070778">
    <property type="term" value="P:L-aspartate transmembrane transport"/>
    <property type="evidence" value="ECO:0000314"/>
    <property type="project" value="EcoCyc"/>
</dbReference>
<dbReference type="GO" id="GO:0098712">
    <property type="term" value="P:L-glutamate import across plasma membrane"/>
    <property type="evidence" value="ECO:0000303"/>
    <property type="project" value="ComplexPortal"/>
</dbReference>
<dbReference type="GO" id="GO:0015813">
    <property type="term" value="P:L-glutamate transmembrane transport"/>
    <property type="evidence" value="ECO:0000314"/>
    <property type="project" value="EcoCyc"/>
</dbReference>
<dbReference type="CDD" id="cd13688">
    <property type="entry name" value="PBP2_GltI_DEBP"/>
    <property type="match status" value="1"/>
</dbReference>
<dbReference type="FunFam" id="3.40.190.10:FF:000047">
    <property type="entry name" value="Amino acid ABC transporter substrate-binding protein"/>
    <property type="match status" value="1"/>
</dbReference>
<dbReference type="Gene3D" id="3.40.190.10">
    <property type="entry name" value="Periplasmic binding protein-like II"/>
    <property type="match status" value="2"/>
</dbReference>
<dbReference type="InterPro" id="IPR051455">
    <property type="entry name" value="Bact_solute-bind_prot3"/>
</dbReference>
<dbReference type="InterPro" id="IPR001638">
    <property type="entry name" value="Solute-binding_3/MltF_N"/>
</dbReference>
<dbReference type="NCBIfam" id="NF008063">
    <property type="entry name" value="PRK10797.1"/>
    <property type="match status" value="1"/>
</dbReference>
<dbReference type="PANTHER" id="PTHR30085">
    <property type="entry name" value="AMINO ACID ABC TRANSPORTER PERMEASE"/>
    <property type="match status" value="1"/>
</dbReference>
<dbReference type="PANTHER" id="PTHR30085:SF2">
    <property type="entry name" value="GLUTAMATE_ASPARTATE IMPORT SOLUTE-BINDING PROTEIN"/>
    <property type="match status" value="1"/>
</dbReference>
<dbReference type="Pfam" id="PF00497">
    <property type="entry name" value="SBP_bac_3"/>
    <property type="match status" value="1"/>
</dbReference>
<dbReference type="SMART" id="SM00062">
    <property type="entry name" value="PBPb"/>
    <property type="match status" value="1"/>
</dbReference>
<dbReference type="SUPFAM" id="SSF53850">
    <property type="entry name" value="Periplasmic binding protein-like II"/>
    <property type="match status" value="1"/>
</dbReference>
<organism>
    <name type="scientific">Escherichia coli (strain K12)</name>
    <dbReference type="NCBI Taxonomy" id="83333"/>
    <lineage>
        <taxon>Bacteria</taxon>
        <taxon>Pseudomonadati</taxon>
        <taxon>Pseudomonadota</taxon>
        <taxon>Gammaproteobacteria</taxon>
        <taxon>Enterobacterales</taxon>
        <taxon>Enterobacteriaceae</taxon>
        <taxon>Escherichia</taxon>
    </lineage>
</organism>
<sequence>MQLRKPATAILALALSAGLAQADDAAPAAGSTLDKIAKNGVIVVGHRESSVPFSYYDNQQKVVGYSQDYSNAIVEAVKKKLNKPDLQVKLIPITSQNRIPLLQNGTFDFECGSTTNNVERQKQAAFSDTIFVVGTRLLTKKGGDIKDFANLKDKAVVVTSGTTSEVLLNKLNEEQKMNMRIISAKDHGDSFRTLESGRAVAFMMDDALLAGERAKAKKPDNWEIVGKPQSQEAYGCMLRKDDPQFKKLMDDTIAQVQTSGEAEKWFDKWFKNPIPPKNLNMNFELSDEMKALFKEPNDKALN</sequence>
<reference key="1">
    <citation type="journal article" date="1996" name="DNA Res.">
        <title>A 718-kb DNA sequence of the Escherichia coli K-12 genome corresponding to the 12.7-28.0 min region on the linkage map.</title>
        <authorList>
            <person name="Oshima T."/>
            <person name="Aiba H."/>
            <person name="Baba T."/>
            <person name="Fujita K."/>
            <person name="Hayashi K."/>
            <person name="Honjo A."/>
            <person name="Ikemoto K."/>
            <person name="Inada T."/>
            <person name="Itoh T."/>
            <person name="Kajihara M."/>
            <person name="Kanai K."/>
            <person name="Kashimoto K."/>
            <person name="Kimura S."/>
            <person name="Kitagawa M."/>
            <person name="Makino K."/>
            <person name="Masuda S."/>
            <person name="Miki T."/>
            <person name="Mizobuchi K."/>
            <person name="Mori H."/>
            <person name="Motomura K."/>
            <person name="Nakamura Y."/>
            <person name="Nashimoto H."/>
            <person name="Nishio Y."/>
            <person name="Saito N."/>
            <person name="Sampei G."/>
            <person name="Seki Y."/>
            <person name="Tagami H."/>
            <person name="Takemoto K."/>
            <person name="Wada C."/>
            <person name="Yamamoto Y."/>
            <person name="Yano M."/>
            <person name="Horiuchi T."/>
        </authorList>
    </citation>
    <scope>NUCLEOTIDE SEQUENCE [LARGE SCALE GENOMIC DNA]</scope>
    <source>
        <strain>K12 / W3110 / ATCC 27325 / DSM 5911</strain>
    </source>
</reference>
<reference key="2">
    <citation type="submission" date="1997-01" db="EMBL/GenBank/DDBJ databases">
        <title>Sequence of minutes 4-25 of Escherichia coli.</title>
        <authorList>
            <person name="Chung E."/>
            <person name="Allen E."/>
            <person name="Araujo R."/>
            <person name="Aparicio A.M."/>
            <person name="Davis K."/>
            <person name="Duncan M."/>
            <person name="Federspiel N."/>
            <person name="Hyman R."/>
            <person name="Kalman S."/>
            <person name="Komp C."/>
            <person name="Kurdi O."/>
            <person name="Lew H."/>
            <person name="Lin D."/>
            <person name="Namath A."/>
            <person name="Oefner P."/>
            <person name="Roberts D."/>
            <person name="Schramm S."/>
            <person name="Davis R.W."/>
        </authorList>
    </citation>
    <scope>NUCLEOTIDE SEQUENCE [LARGE SCALE GENOMIC DNA]</scope>
    <source>
        <strain>K12 / MG1655 / ATCC 47076</strain>
    </source>
</reference>
<reference key="3">
    <citation type="journal article" date="1997" name="Science">
        <title>The complete genome sequence of Escherichia coli K-12.</title>
        <authorList>
            <person name="Blattner F.R."/>
            <person name="Plunkett G. III"/>
            <person name="Bloch C.A."/>
            <person name="Perna N.T."/>
            <person name="Burland V."/>
            <person name="Riley M."/>
            <person name="Collado-Vides J."/>
            <person name="Glasner J.D."/>
            <person name="Rode C.K."/>
            <person name="Mayhew G.F."/>
            <person name="Gregor J."/>
            <person name="Davis N.W."/>
            <person name="Kirkpatrick H.A."/>
            <person name="Goeden M.A."/>
            <person name="Rose D.J."/>
            <person name="Mau B."/>
            <person name="Shao Y."/>
        </authorList>
    </citation>
    <scope>NUCLEOTIDE SEQUENCE [LARGE SCALE GENOMIC DNA]</scope>
    <source>
        <strain>K12 / MG1655 / ATCC 47076</strain>
    </source>
</reference>
<reference key="4">
    <citation type="journal article" date="2006" name="Mol. Syst. Biol.">
        <title>Highly accurate genome sequences of Escherichia coli K-12 strains MG1655 and W3110.</title>
        <authorList>
            <person name="Hayashi K."/>
            <person name="Morooka N."/>
            <person name="Yamamoto Y."/>
            <person name="Fujita K."/>
            <person name="Isono K."/>
            <person name="Choi S."/>
            <person name="Ohtsubo E."/>
            <person name="Baba T."/>
            <person name="Wanner B.L."/>
            <person name="Mori H."/>
            <person name="Horiuchi T."/>
        </authorList>
    </citation>
    <scope>NUCLEOTIDE SEQUENCE [LARGE SCALE GENOMIC DNA]</scope>
    <source>
        <strain>K12 / W3110 / ATCC 27325 / DSM 5911</strain>
    </source>
</reference>
<reference key="5">
    <citation type="submission" date="1994-06" db="EMBL/GenBank/DDBJ databases">
        <title>Sequence and characterisation of three genes of a glutamate-aspartate binding protein-dependent transport system of Escherichia coli K12.</title>
        <authorList>
            <person name="Lum D."/>
            <person name="Wallace B.J."/>
        </authorList>
    </citation>
    <scope>NUCLEOTIDE SEQUENCE [GENOMIC DNA] OF 242-302</scope>
    <source>
        <strain>K12 / BK9MDG</strain>
    </source>
</reference>
<reference key="6">
    <citation type="submission" date="1994-09" db="UniProtKB">
        <authorList>
            <person name="Pasquali C."/>
            <person name="Sanchez J.-C."/>
            <person name="Ravier F."/>
            <person name="Golaz O."/>
            <person name="Hughes G.J."/>
            <person name="Frutiger S."/>
            <person name="Paquet N."/>
            <person name="Wilkins M."/>
            <person name="Appel R.D."/>
            <person name="Bairoch A."/>
            <person name="Hochstrasser D.F."/>
        </authorList>
    </citation>
    <scope>PROTEIN SEQUENCE OF 23-33</scope>
    <source>
        <strain>K12 / W3110 / ATCC 27325 / DSM 5911</strain>
    </source>
</reference>
<reference key="7">
    <citation type="journal article" date="1999" name="Electrophoresis">
        <title>Enrichment of low abundance proteins of Escherichia coli by hydroxyapatite chromatography.</title>
        <authorList>
            <person name="Fountoulakis M."/>
            <person name="Takacs M.-F."/>
            <person name="Berndt P."/>
            <person name="Langen H."/>
            <person name="Takacs B."/>
        </authorList>
    </citation>
    <scope>IDENTIFICATION BY MASS SPECTROMETRY</scope>
    <source>
        <strain>B / BL21</strain>
    </source>
</reference>
<reference key="8">
    <citation type="journal article" date="1975" name="J. Biol. Chem.">
        <title>Purification and properties of a periplasmic glutamate-aspartate binding protein from Escherichia coli K12 strain W3092.</title>
        <authorList>
            <person name="Willis R.C."/>
            <person name="Furlong C.E."/>
        </authorList>
    </citation>
    <scope>FUNCTION AS A GLUTAMATE-ASPARTATE BINDING PROTEIN</scope>
    <scope>SUBCELLULAR LOCATION</scope>
    <source>
        <strain>K12 / W3092</strain>
    </source>
</reference>
<reference key="9">
    <citation type="journal article" date="1975" name="J. Biol. Chem.">
        <title>Interactions of a glutamate-aspartate binding protein with the glutamate transport system of Escherichia coli.</title>
        <authorList>
            <person name="Willis R.C."/>
            <person name="Furlong C.E."/>
        </authorList>
    </citation>
    <scope>FUNCTION</scope>
</reference>
<reference key="10">
    <citation type="journal article" date="1977" name="J. Biol. Chem.">
        <title>Resolution of the multiplicity of the glutamate and aspartate transport systems of Escherichia coli.</title>
        <authorList>
            <person name="Schellenberg G.D."/>
            <person name="Furlong C.E."/>
        </authorList>
    </citation>
    <scope>FUNCTION</scope>
    <source>
        <strain>D2W</strain>
    </source>
</reference>
<reference key="11">
    <citation type="journal article" date="1998" name="Mol. Microbiol.">
        <title>The Escherichia coli ATP-binding cassette (ABC) proteins.</title>
        <authorList>
            <person name="Linton K.J."/>
            <person name="Higgins C.F."/>
        </authorList>
    </citation>
    <scope>REVIEW</scope>
</reference>
<proteinExistence type="evidence at protein level"/>
<feature type="signal peptide" evidence="4">
    <location>
        <begin position="1"/>
        <end position="22"/>
    </location>
</feature>
<feature type="chain" id="PRO_0000031758" description="Glutamate/aspartate import solute-binding protein">
    <location>
        <begin position="23"/>
        <end position="302"/>
    </location>
</feature>
<feature type="helix" evidence="7">
    <location>
        <begin position="31"/>
        <end position="39"/>
    </location>
</feature>
<feature type="strand" evidence="7">
    <location>
        <begin position="41"/>
        <end position="46"/>
    </location>
</feature>
<feature type="strand" evidence="7">
    <location>
        <begin position="48"/>
        <end position="50"/>
    </location>
</feature>
<feature type="turn" evidence="7">
    <location>
        <begin position="51"/>
        <end position="53"/>
    </location>
</feature>
<feature type="strand" evidence="7">
    <location>
        <begin position="54"/>
        <end position="56"/>
    </location>
</feature>
<feature type="strand" evidence="7">
    <location>
        <begin position="62"/>
        <end position="64"/>
    </location>
</feature>
<feature type="helix" evidence="7">
    <location>
        <begin position="65"/>
        <end position="81"/>
    </location>
</feature>
<feature type="strand" evidence="7">
    <location>
        <begin position="87"/>
        <end position="92"/>
    </location>
</feature>
<feature type="turn" evidence="7">
    <location>
        <begin position="95"/>
        <end position="97"/>
    </location>
</feature>
<feature type="helix" evidence="7">
    <location>
        <begin position="98"/>
        <end position="103"/>
    </location>
</feature>
<feature type="strand" evidence="7">
    <location>
        <begin position="108"/>
        <end position="110"/>
    </location>
</feature>
<feature type="helix" evidence="7">
    <location>
        <begin position="118"/>
        <end position="121"/>
    </location>
</feature>
<feature type="strand" evidence="7">
    <location>
        <begin position="125"/>
        <end position="140"/>
    </location>
</feature>
<feature type="helix" evidence="7">
    <location>
        <begin position="148"/>
        <end position="151"/>
    </location>
</feature>
<feature type="strand" evidence="7">
    <location>
        <begin position="154"/>
        <end position="159"/>
    </location>
</feature>
<feature type="helix" evidence="7">
    <location>
        <begin position="163"/>
        <end position="174"/>
    </location>
</feature>
<feature type="strand" evidence="7">
    <location>
        <begin position="180"/>
        <end position="186"/>
    </location>
</feature>
<feature type="helix" evidence="7">
    <location>
        <begin position="187"/>
        <end position="195"/>
    </location>
</feature>
<feature type="strand" evidence="7">
    <location>
        <begin position="200"/>
        <end position="205"/>
    </location>
</feature>
<feature type="helix" evidence="7">
    <location>
        <begin position="206"/>
        <end position="214"/>
    </location>
</feature>
<feature type="strand" evidence="7">
    <location>
        <begin position="216"/>
        <end position="218"/>
    </location>
</feature>
<feature type="helix" evidence="7">
    <location>
        <begin position="219"/>
        <end position="221"/>
    </location>
</feature>
<feature type="strand" evidence="7">
    <location>
        <begin position="222"/>
        <end position="226"/>
    </location>
</feature>
<feature type="strand" evidence="7">
    <location>
        <begin position="231"/>
        <end position="238"/>
    </location>
</feature>
<feature type="helix" evidence="7">
    <location>
        <begin position="243"/>
        <end position="258"/>
    </location>
</feature>
<feature type="helix" evidence="7">
    <location>
        <begin position="261"/>
        <end position="270"/>
    </location>
</feature>
<feature type="strand" evidence="7">
    <location>
        <begin position="283"/>
        <end position="287"/>
    </location>
</feature>
<feature type="helix" evidence="7">
    <location>
        <begin position="288"/>
        <end position="290"/>
    </location>
</feature>
<feature type="strand" evidence="7">
    <location>
        <begin position="292"/>
        <end position="294"/>
    </location>
</feature>
<protein>
    <recommendedName>
        <fullName evidence="5">Glutamate/aspartate import solute-binding protein</fullName>
    </recommendedName>
</protein>
<evidence type="ECO:0000269" key="1">
    <source>
    </source>
</evidence>
<evidence type="ECO:0000269" key="2">
    <source>
    </source>
</evidence>
<evidence type="ECO:0000269" key="3">
    <source>
    </source>
</evidence>
<evidence type="ECO:0000269" key="4">
    <source ref="6"/>
</evidence>
<evidence type="ECO:0000305" key="5"/>
<evidence type="ECO:0000305" key="6">
    <source>
    </source>
</evidence>
<evidence type="ECO:0007829" key="7">
    <source>
        <dbReference type="PDB" id="8OVO"/>
    </source>
</evidence>
<name>GLTI_ECOLI</name>
<gene>
    <name type="primary">gltI</name>
    <name type="synonym">ybeJ</name>
    <name type="synonym">yzzK</name>
    <name type="ordered locus">b0655</name>
    <name type="ordered locus">JW5092</name>
</gene>
<accession>P37902</accession>
<accession>P41408</accession>
<accession>P77612</accession>
<accession>Q9R7T1</accession>
<accession>Q9R7T3</accession>
<keyword id="KW-0002">3D-structure</keyword>
<keyword id="KW-0029">Amino-acid transport</keyword>
<keyword id="KW-0903">Direct protein sequencing</keyword>
<keyword id="KW-0574">Periplasm</keyword>
<keyword id="KW-1185">Reference proteome</keyword>
<keyword id="KW-0732">Signal</keyword>
<keyword id="KW-0813">Transport</keyword>